<accession>Q9D0F3</accession>
<comment type="function">
    <text evidence="1">Mannose-specific lectin. May recognize sugar residues of glycoproteins, glycolipids, or glycosylphosphatidyl inositol anchors and may be involved in the sorting or recycling of proteins, lipids, or both. The LMAN1-MCFD2 complex forms a specific cargo receptor for the ER-to-Golgi transport of selected proteins (By similarity).</text>
</comment>
<comment type="subunit">
    <text evidence="2">Exists both as a covalent disulfide-linked homohexamer, and a complex of three disulfide-linked dimers non-covalently kept together. Interacts with MCFD2. May interact with TMEM115. Interacts with RAB3GAP1 and RAB3GAP2. Interacts with UBXN6. Interacts with SERPINA1/alpha1-antitrypsin (By similarity). Interacts with BET1 (By similarity).</text>
</comment>
<comment type="subcellular location">
    <subcellularLocation>
        <location evidence="1">Endoplasmic reticulum-Golgi intermediate compartment membrane</location>
        <topology evidence="1">Single-pass type I membrane protein</topology>
    </subcellularLocation>
    <subcellularLocation>
        <location evidence="1">Golgi apparatus membrane</location>
        <topology evidence="1">Single-pass membrane protein</topology>
    </subcellularLocation>
    <subcellularLocation>
        <location evidence="1">Endoplasmic reticulum membrane</location>
        <topology evidence="1">Single-pass membrane protein</topology>
    </subcellularLocation>
</comment>
<comment type="domain">
    <text evidence="1">The FF ER export motif at the C-terminus is not sufficient to support endoplasmic reticulum exit, and needs assistance of Gln-508 for proper recognition of COPII coat components.</text>
</comment>
<keyword id="KW-1015">Disulfide bond</keyword>
<keyword id="KW-0256">Endoplasmic reticulum</keyword>
<keyword id="KW-0931">ER-Golgi transport</keyword>
<keyword id="KW-0333">Golgi apparatus</keyword>
<keyword id="KW-0430">Lectin</keyword>
<keyword id="KW-0472">Membrane</keyword>
<keyword id="KW-0479">Metal-binding</keyword>
<keyword id="KW-0597">Phosphoprotein</keyword>
<keyword id="KW-0653">Protein transport</keyword>
<keyword id="KW-1185">Reference proteome</keyword>
<keyword id="KW-0732">Signal</keyword>
<keyword id="KW-0812">Transmembrane</keyword>
<keyword id="KW-1133">Transmembrane helix</keyword>
<keyword id="KW-0813">Transport</keyword>
<proteinExistence type="evidence at protein level"/>
<reference key="1">
    <citation type="journal article" date="2005" name="Science">
        <title>The transcriptional landscape of the mammalian genome.</title>
        <authorList>
            <person name="Carninci P."/>
            <person name="Kasukawa T."/>
            <person name="Katayama S."/>
            <person name="Gough J."/>
            <person name="Frith M.C."/>
            <person name="Maeda N."/>
            <person name="Oyama R."/>
            <person name="Ravasi T."/>
            <person name="Lenhard B."/>
            <person name="Wells C."/>
            <person name="Kodzius R."/>
            <person name="Shimokawa K."/>
            <person name="Bajic V.B."/>
            <person name="Brenner S.E."/>
            <person name="Batalov S."/>
            <person name="Forrest A.R."/>
            <person name="Zavolan M."/>
            <person name="Davis M.J."/>
            <person name="Wilming L.G."/>
            <person name="Aidinis V."/>
            <person name="Allen J.E."/>
            <person name="Ambesi-Impiombato A."/>
            <person name="Apweiler R."/>
            <person name="Aturaliya R.N."/>
            <person name="Bailey T.L."/>
            <person name="Bansal M."/>
            <person name="Baxter L."/>
            <person name="Beisel K.W."/>
            <person name="Bersano T."/>
            <person name="Bono H."/>
            <person name="Chalk A.M."/>
            <person name="Chiu K.P."/>
            <person name="Choudhary V."/>
            <person name="Christoffels A."/>
            <person name="Clutterbuck D.R."/>
            <person name="Crowe M.L."/>
            <person name="Dalla E."/>
            <person name="Dalrymple B.P."/>
            <person name="de Bono B."/>
            <person name="Della Gatta G."/>
            <person name="di Bernardo D."/>
            <person name="Down T."/>
            <person name="Engstrom P."/>
            <person name="Fagiolini M."/>
            <person name="Faulkner G."/>
            <person name="Fletcher C.F."/>
            <person name="Fukushima T."/>
            <person name="Furuno M."/>
            <person name="Futaki S."/>
            <person name="Gariboldi M."/>
            <person name="Georgii-Hemming P."/>
            <person name="Gingeras T.R."/>
            <person name="Gojobori T."/>
            <person name="Green R.E."/>
            <person name="Gustincich S."/>
            <person name="Harbers M."/>
            <person name="Hayashi Y."/>
            <person name="Hensch T.K."/>
            <person name="Hirokawa N."/>
            <person name="Hill D."/>
            <person name="Huminiecki L."/>
            <person name="Iacono M."/>
            <person name="Ikeo K."/>
            <person name="Iwama A."/>
            <person name="Ishikawa T."/>
            <person name="Jakt M."/>
            <person name="Kanapin A."/>
            <person name="Katoh M."/>
            <person name="Kawasawa Y."/>
            <person name="Kelso J."/>
            <person name="Kitamura H."/>
            <person name="Kitano H."/>
            <person name="Kollias G."/>
            <person name="Krishnan S.P."/>
            <person name="Kruger A."/>
            <person name="Kummerfeld S.K."/>
            <person name="Kurochkin I.V."/>
            <person name="Lareau L.F."/>
            <person name="Lazarevic D."/>
            <person name="Lipovich L."/>
            <person name="Liu J."/>
            <person name="Liuni S."/>
            <person name="McWilliam S."/>
            <person name="Madan Babu M."/>
            <person name="Madera M."/>
            <person name="Marchionni L."/>
            <person name="Matsuda H."/>
            <person name="Matsuzawa S."/>
            <person name="Miki H."/>
            <person name="Mignone F."/>
            <person name="Miyake S."/>
            <person name="Morris K."/>
            <person name="Mottagui-Tabar S."/>
            <person name="Mulder N."/>
            <person name="Nakano N."/>
            <person name="Nakauchi H."/>
            <person name="Ng P."/>
            <person name="Nilsson R."/>
            <person name="Nishiguchi S."/>
            <person name="Nishikawa S."/>
            <person name="Nori F."/>
            <person name="Ohara O."/>
            <person name="Okazaki Y."/>
            <person name="Orlando V."/>
            <person name="Pang K.C."/>
            <person name="Pavan W.J."/>
            <person name="Pavesi G."/>
            <person name="Pesole G."/>
            <person name="Petrovsky N."/>
            <person name="Piazza S."/>
            <person name="Reed J."/>
            <person name="Reid J.F."/>
            <person name="Ring B.Z."/>
            <person name="Ringwald M."/>
            <person name="Rost B."/>
            <person name="Ruan Y."/>
            <person name="Salzberg S.L."/>
            <person name="Sandelin A."/>
            <person name="Schneider C."/>
            <person name="Schoenbach C."/>
            <person name="Sekiguchi K."/>
            <person name="Semple C.A."/>
            <person name="Seno S."/>
            <person name="Sessa L."/>
            <person name="Sheng Y."/>
            <person name="Shibata Y."/>
            <person name="Shimada H."/>
            <person name="Shimada K."/>
            <person name="Silva D."/>
            <person name="Sinclair B."/>
            <person name="Sperling S."/>
            <person name="Stupka E."/>
            <person name="Sugiura K."/>
            <person name="Sultana R."/>
            <person name="Takenaka Y."/>
            <person name="Taki K."/>
            <person name="Tammoja K."/>
            <person name="Tan S.L."/>
            <person name="Tang S."/>
            <person name="Taylor M.S."/>
            <person name="Tegner J."/>
            <person name="Teichmann S.A."/>
            <person name="Ueda H.R."/>
            <person name="van Nimwegen E."/>
            <person name="Verardo R."/>
            <person name="Wei C.L."/>
            <person name="Yagi K."/>
            <person name="Yamanishi H."/>
            <person name="Zabarovsky E."/>
            <person name="Zhu S."/>
            <person name="Zimmer A."/>
            <person name="Hide W."/>
            <person name="Bult C."/>
            <person name="Grimmond S.M."/>
            <person name="Teasdale R.D."/>
            <person name="Liu E.T."/>
            <person name="Brusic V."/>
            <person name="Quackenbush J."/>
            <person name="Wahlestedt C."/>
            <person name="Mattick J.S."/>
            <person name="Hume D.A."/>
            <person name="Kai C."/>
            <person name="Sasaki D."/>
            <person name="Tomaru Y."/>
            <person name="Fukuda S."/>
            <person name="Kanamori-Katayama M."/>
            <person name="Suzuki M."/>
            <person name="Aoki J."/>
            <person name="Arakawa T."/>
            <person name="Iida J."/>
            <person name="Imamura K."/>
            <person name="Itoh M."/>
            <person name="Kato T."/>
            <person name="Kawaji H."/>
            <person name="Kawagashira N."/>
            <person name="Kawashima T."/>
            <person name="Kojima M."/>
            <person name="Kondo S."/>
            <person name="Konno H."/>
            <person name="Nakano K."/>
            <person name="Ninomiya N."/>
            <person name="Nishio T."/>
            <person name="Okada M."/>
            <person name="Plessy C."/>
            <person name="Shibata K."/>
            <person name="Shiraki T."/>
            <person name="Suzuki S."/>
            <person name="Tagami M."/>
            <person name="Waki K."/>
            <person name="Watahiki A."/>
            <person name="Okamura-Oho Y."/>
            <person name="Suzuki H."/>
            <person name="Kawai J."/>
            <person name="Hayashizaki Y."/>
        </authorList>
    </citation>
    <scope>NUCLEOTIDE SEQUENCE [LARGE SCALE MRNA]</scope>
    <source>
        <strain>C57BL/6J</strain>
        <tissue>Embryo</tissue>
    </source>
</reference>
<reference key="2">
    <citation type="journal article" date="2004" name="Genome Res.">
        <title>The status, quality, and expansion of the NIH full-length cDNA project: the Mammalian Gene Collection (MGC).</title>
        <authorList>
            <consortium name="The MGC Project Team"/>
        </authorList>
    </citation>
    <scope>NUCLEOTIDE SEQUENCE [LARGE SCALE MRNA]</scope>
    <source>
        <strain>FVB/N</strain>
        <tissue>Mammary tumor</tissue>
    </source>
</reference>
<reference key="3">
    <citation type="journal article" date="2010" name="Cell">
        <title>A tissue-specific atlas of mouse protein phosphorylation and expression.</title>
        <authorList>
            <person name="Huttlin E.L."/>
            <person name="Jedrychowski M.P."/>
            <person name="Elias J.E."/>
            <person name="Goswami T."/>
            <person name="Rad R."/>
            <person name="Beausoleil S.A."/>
            <person name="Villen J."/>
            <person name="Haas W."/>
            <person name="Sowa M.E."/>
            <person name="Gygi S.P."/>
        </authorList>
    </citation>
    <scope>IDENTIFICATION BY MASS SPECTROMETRY [LARGE SCALE ANALYSIS]</scope>
    <source>
        <tissue>Brain</tissue>
        <tissue>Brown adipose tissue</tissue>
        <tissue>Heart</tissue>
        <tissue>Kidney</tissue>
        <tissue>Liver</tissue>
        <tissue>Lung</tissue>
        <tissue>Pancreas</tissue>
        <tissue>Spleen</tissue>
        <tissue>Testis</tissue>
    </source>
</reference>
<protein>
    <recommendedName>
        <fullName>Protein ERGIC-53</fullName>
    </recommendedName>
    <alternativeName>
        <fullName>ER-Golgi intermediate compartment 53 kDa protein</fullName>
    </alternativeName>
    <alternativeName>
        <fullName>Lectin mannose-binding 1</fullName>
    </alternativeName>
    <alternativeName>
        <fullName>p58</fullName>
    </alternativeName>
</protein>
<feature type="signal peptide" evidence="3">
    <location>
        <begin position="1"/>
        <end position="30"/>
    </location>
</feature>
<feature type="chain" id="PRO_0000017661" description="Protein ERGIC-53">
    <location>
        <begin position="31"/>
        <end position="517"/>
    </location>
</feature>
<feature type="topological domain" description="Lumenal" evidence="3">
    <location>
        <begin position="31"/>
        <end position="484"/>
    </location>
</feature>
<feature type="transmembrane region" description="Helical" evidence="3">
    <location>
        <begin position="485"/>
        <end position="505"/>
    </location>
</feature>
<feature type="topological domain" description="Cytoplasmic" evidence="3">
    <location>
        <begin position="506"/>
        <end position="517"/>
    </location>
</feature>
<feature type="domain" description="L-type lectin-like" evidence="4">
    <location>
        <begin position="52"/>
        <end position="275"/>
    </location>
</feature>
<feature type="region of interest" description="Mediates interaction with RAB3GAP1, RAB3GAP2 and UBXN6" evidence="2">
    <location>
        <begin position="506"/>
        <end position="517"/>
    </location>
</feature>
<feature type="short sequence motif" description="ER export motif" evidence="1">
    <location>
        <begin position="516"/>
        <end position="517"/>
    </location>
</feature>
<feature type="binding site" evidence="4">
    <location>
        <position position="96"/>
    </location>
    <ligand>
        <name>a carbohydrate</name>
        <dbReference type="ChEBI" id="CHEBI:16646"/>
    </ligand>
</feature>
<feature type="binding site" evidence="4">
    <location>
        <position position="129"/>
    </location>
    <ligand>
        <name>a carbohydrate</name>
        <dbReference type="ChEBI" id="CHEBI:16646"/>
    </ligand>
</feature>
<feature type="binding site" evidence="4">
    <location>
        <position position="160"/>
    </location>
    <ligand>
        <name>Ca(2+)</name>
        <dbReference type="ChEBI" id="CHEBI:29108"/>
    </ligand>
</feature>
<feature type="binding site" evidence="4">
    <location>
        <position position="162"/>
    </location>
    <ligand>
        <name>Ca(2+)</name>
        <dbReference type="ChEBI" id="CHEBI:29108"/>
    </ligand>
</feature>
<feature type="binding site" evidence="4">
    <location>
        <position position="164"/>
    </location>
    <ligand>
        <name>a carbohydrate</name>
        <dbReference type="ChEBI" id="CHEBI:16646"/>
    </ligand>
</feature>
<feature type="binding site" evidence="4">
    <location>
        <position position="164"/>
    </location>
    <ligand>
        <name>Ca(2+)</name>
        <dbReference type="ChEBI" id="CHEBI:29108"/>
    </ligand>
</feature>
<feature type="binding site" evidence="4">
    <location>
        <position position="186"/>
    </location>
    <ligand>
        <name>a carbohydrate</name>
        <dbReference type="ChEBI" id="CHEBI:16646"/>
    </ligand>
</feature>
<feature type="binding site" evidence="4">
    <location>
        <position position="189"/>
    </location>
    <ligand>
        <name>Ca(2+)</name>
        <dbReference type="ChEBI" id="CHEBI:29108"/>
    </ligand>
</feature>
<feature type="binding site" evidence="4">
    <location>
        <begin position="259"/>
        <end position="261"/>
    </location>
    <ligand>
        <name>a carbohydrate</name>
        <dbReference type="ChEBI" id="CHEBI:16646"/>
    </ligand>
</feature>
<feature type="site" description="Required for ER export" evidence="1">
    <location>
        <position position="508"/>
    </location>
</feature>
<feature type="modified residue" description="Phosphoserine" evidence="2">
    <location>
        <position position="433"/>
    </location>
</feature>
<feature type="disulfide bond" evidence="4">
    <location>
        <begin position="198"/>
        <end position="238"/>
    </location>
</feature>
<feature type="disulfide bond" description="Interchain" evidence="4">
    <location>
        <position position="473"/>
    </location>
</feature>
<feature type="disulfide bond" description="Interchain" evidence="4">
    <location>
        <position position="482"/>
    </location>
</feature>
<organism>
    <name type="scientific">Mus musculus</name>
    <name type="common">Mouse</name>
    <dbReference type="NCBI Taxonomy" id="10090"/>
    <lineage>
        <taxon>Eukaryota</taxon>
        <taxon>Metazoa</taxon>
        <taxon>Chordata</taxon>
        <taxon>Craniata</taxon>
        <taxon>Vertebrata</taxon>
        <taxon>Euteleostomi</taxon>
        <taxon>Mammalia</taxon>
        <taxon>Eutheria</taxon>
        <taxon>Euarchontoglires</taxon>
        <taxon>Glires</taxon>
        <taxon>Rodentia</taxon>
        <taxon>Myomorpha</taxon>
        <taxon>Muroidea</taxon>
        <taxon>Muridae</taxon>
        <taxon>Murinae</taxon>
        <taxon>Mus</taxon>
        <taxon>Mus</taxon>
    </lineage>
</organism>
<name>LMAN1_MOUSE</name>
<sequence>MAVSRRRVPQAGARSFFCALLLSFSQFTGSDGTGGDAAAPGAAGTQAELPHRRFEYKYSFKGPHLVQSDGTVPFWAHAGNAIPSADQIRIAPSLKSQRGSVWTKAKAAFENWEVEVTFRVTGRGRIGADGLAIWYTENQGLDGPVFGSADTWNGVGIFFDSFDNDGKKNNPAIVVIGNNGQINYDHQNDGATQALASCQRDFRNKPYPVRAKITYYQKTLTVMINNGFTPDKNDYEFCAKVENMVIPTQGHFGISAATGGLADDHDVLSFLTFQLTEPGKEPPTAEKDISEKEKEKYQEEFEHFQQELDKKKEEFQKGHPDLQGQPADDIFESIGDRELRQVFEGQNRIHLEIKQLNRQLDMILDEQRRYVSSLTEEISRRGAGTPGQPGQVSQQELDTVVKSQQEILRQVNEVKNSMSETVRLVSGIQHPGSAGVYETTQHFMDIKEHLHVVKRDIDSLAQRSMPSNEKPKCPDLPPFPSCLSTIHFVIFVVVQTVLFVGYIMYRTQQEAAAKKFF</sequence>
<gene>
    <name type="primary">Lman1</name>
    <name type="synonym">Ergic53</name>
</gene>
<dbReference type="EMBL" id="AK011495">
    <property type="protein sequence ID" value="BAB27655.1"/>
    <property type="molecule type" value="mRNA"/>
</dbReference>
<dbReference type="EMBL" id="BC057165">
    <property type="protein sequence ID" value="AAH57165.1"/>
    <property type="molecule type" value="mRNA"/>
</dbReference>
<dbReference type="CCDS" id="CCDS29313.1"/>
<dbReference type="RefSeq" id="NP_001165533.1">
    <property type="nucleotide sequence ID" value="NM_001172062.1"/>
</dbReference>
<dbReference type="RefSeq" id="NP_081676.1">
    <property type="nucleotide sequence ID" value="NM_027400.3"/>
</dbReference>
<dbReference type="SMR" id="Q9D0F3"/>
<dbReference type="BioGRID" id="214001">
    <property type="interactions" value="12"/>
</dbReference>
<dbReference type="FunCoup" id="Q9D0F3">
    <property type="interactions" value="2596"/>
</dbReference>
<dbReference type="IntAct" id="Q9D0F3">
    <property type="interactions" value="2"/>
</dbReference>
<dbReference type="MINT" id="Q9D0F3"/>
<dbReference type="STRING" id="10090.ENSMUSP00000158495"/>
<dbReference type="GlyGen" id="Q9D0F3">
    <property type="glycosylation" value="1 site, 1 O-linked glycan (1 site)"/>
</dbReference>
<dbReference type="iPTMnet" id="Q9D0F3"/>
<dbReference type="PhosphoSitePlus" id="Q9D0F3"/>
<dbReference type="SwissPalm" id="Q9D0F3"/>
<dbReference type="jPOST" id="Q9D0F3"/>
<dbReference type="PaxDb" id="10090-ENSMUSP00000040140"/>
<dbReference type="PeptideAtlas" id="Q9D0F3"/>
<dbReference type="ProteomicsDB" id="292102"/>
<dbReference type="Pumba" id="Q9D0F3"/>
<dbReference type="Antibodypedia" id="1115">
    <property type="antibodies" value="297 antibodies from 32 providers"/>
</dbReference>
<dbReference type="DNASU" id="70361"/>
<dbReference type="Ensembl" id="ENSMUST00000048260.15">
    <property type="protein sequence ID" value="ENSMUSP00000040140.8"/>
    <property type="gene ID" value="ENSMUSG00000041891.17"/>
</dbReference>
<dbReference type="Ensembl" id="ENSMUST00000120461.9">
    <property type="protein sequence ID" value="ENSMUSP00000113326.2"/>
    <property type="gene ID" value="ENSMUSG00000041891.17"/>
</dbReference>
<dbReference type="Ensembl" id="ENSMUST00000236866.2">
    <property type="protein sequence ID" value="ENSMUSP00000158495.2"/>
    <property type="gene ID" value="ENSMUSG00000041891.17"/>
</dbReference>
<dbReference type="GeneID" id="70361"/>
<dbReference type="KEGG" id="mmu:70361"/>
<dbReference type="UCSC" id="uc008ffn.2">
    <property type="organism name" value="mouse"/>
</dbReference>
<dbReference type="AGR" id="MGI:1917611"/>
<dbReference type="CTD" id="3998"/>
<dbReference type="MGI" id="MGI:1917611">
    <property type="gene designation" value="Lman1"/>
</dbReference>
<dbReference type="VEuPathDB" id="HostDB:ENSMUSG00000041891"/>
<dbReference type="eggNOG" id="KOG3838">
    <property type="taxonomic scope" value="Eukaryota"/>
</dbReference>
<dbReference type="GeneTree" id="ENSGT00940000159146"/>
<dbReference type="HOGENOM" id="CLU_041093_4_0_1"/>
<dbReference type="InParanoid" id="Q9D0F3"/>
<dbReference type="OMA" id="WSAEFQF"/>
<dbReference type="OrthoDB" id="10265193at2759"/>
<dbReference type="PhylomeDB" id="Q9D0F3"/>
<dbReference type="TreeFam" id="TF313311"/>
<dbReference type="Reactome" id="R-MMU-204005">
    <property type="pathway name" value="COPII-mediated vesicle transport"/>
</dbReference>
<dbReference type="Reactome" id="R-MMU-5694530">
    <property type="pathway name" value="Cargo concentration in the ER"/>
</dbReference>
<dbReference type="Reactome" id="R-MMU-8980692">
    <property type="pathway name" value="RHOA GTPase cycle"/>
</dbReference>
<dbReference type="Reactome" id="R-MMU-9013106">
    <property type="pathway name" value="RHOC GTPase cycle"/>
</dbReference>
<dbReference type="Reactome" id="R-MMU-9013404">
    <property type="pathway name" value="RAC2 GTPase cycle"/>
</dbReference>
<dbReference type="Reactome" id="R-MMU-9013405">
    <property type="pathway name" value="RHOD GTPase cycle"/>
</dbReference>
<dbReference type="Reactome" id="R-MMU-9013408">
    <property type="pathway name" value="RHOG GTPase cycle"/>
</dbReference>
<dbReference type="Reactome" id="R-MMU-9013423">
    <property type="pathway name" value="RAC3 GTPase cycle"/>
</dbReference>
<dbReference type="BioGRID-ORCS" id="70361">
    <property type="hits" value="1 hit in 80 CRISPR screens"/>
</dbReference>
<dbReference type="ChiTaRS" id="Lman1">
    <property type="organism name" value="mouse"/>
</dbReference>
<dbReference type="PRO" id="PR:Q9D0F3"/>
<dbReference type="Proteomes" id="UP000000589">
    <property type="component" value="Chromosome 18"/>
</dbReference>
<dbReference type="RNAct" id="Q9D0F3">
    <property type="molecule type" value="protein"/>
</dbReference>
<dbReference type="Bgee" id="ENSMUSG00000041891">
    <property type="expression patterns" value="Expressed in metanephric loop of Henle and 269 other cell types or tissues"/>
</dbReference>
<dbReference type="ExpressionAtlas" id="Q9D0F3">
    <property type="expression patterns" value="baseline and differential"/>
</dbReference>
<dbReference type="GO" id="GO:0062023">
    <property type="term" value="C:collagen-containing extracellular matrix"/>
    <property type="evidence" value="ECO:0007005"/>
    <property type="project" value="BHF-UCL"/>
</dbReference>
<dbReference type="GO" id="GO:0030134">
    <property type="term" value="C:COPII-coated ER to Golgi transport vesicle"/>
    <property type="evidence" value="ECO:0000314"/>
    <property type="project" value="MGI"/>
</dbReference>
<dbReference type="GO" id="GO:0005789">
    <property type="term" value="C:endoplasmic reticulum membrane"/>
    <property type="evidence" value="ECO:0007669"/>
    <property type="project" value="UniProtKB-SubCell"/>
</dbReference>
<dbReference type="GO" id="GO:0005793">
    <property type="term" value="C:endoplasmic reticulum-Golgi intermediate compartment"/>
    <property type="evidence" value="ECO:0000314"/>
    <property type="project" value="MGI"/>
</dbReference>
<dbReference type="GO" id="GO:0033116">
    <property type="term" value="C:endoplasmic reticulum-Golgi intermediate compartment membrane"/>
    <property type="evidence" value="ECO:0007669"/>
    <property type="project" value="UniProtKB-SubCell"/>
</dbReference>
<dbReference type="GO" id="GO:0005794">
    <property type="term" value="C:Golgi apparatus"/>
    <property type="evidence" value="ECO:0000314"/>
    <property type="project" value="MGI"/>
</dbReference>
<dbReference type="GO" id="GO:0000139">
    <property type="term" value="C:Golgi membrane"/>
    <property type="evidence" value="ECO:0007669"/>
    <property type="project" value="UniProtKB-SubCell"/>
</dbReference>
<dbReference type="GO" id="GO:0030017">
    <property type="term" value="C:sarcomere"/>
    <property type="evidence" value="ECO:0000314"/>
    <property type="project" value="MGI"/>
</dbReference>
<dbReference type="GO" id="GO:0030246">
    <property type="term" value="F:carbohydrate binding"/>
    <property type="evidence" value="ECO:0007669"/>
    <property type="project" value="UniProtKB-KW"/>
</dbReference>
<dbReference type="GO" id="GO:0046872">
    <property type="term" value="F:metal ion binding"/>
    <property type="evidence" value="ECO:0007669"/>
    <property type="project" value="UniProtKB-KW"/>
</dbReference>
<dbReference type="GO" id="GO:0007029">
    <property type="term" value="P:endoplasmic reticulum organization"/>
    <property type="evidence" value="ECO:0000315"/>
    <property type="project" value="MGI"/>
</dbReference>
<dbReference type="GO" id="GO:0006888">
    <property type="term" value="P:endoplasmic reticulum to Golgi vesicle-mediated transport"/>
    <property type="evidence" value="ECO:0000304"/>
    <property type="project" value="MGI"/>
</dbReference>
<dbReference type="GO" id="GO:0010467">
    <property type="term" value="P:gene expression"/>
    <property type="evidence" value="ECO:0000315"/>
    <property type="project" value="MGI"/>
</dbReference>
<dbReference type="GO" id="GO:0007030">
    <property type="term" value="P:Golgi organization"/>
    <property type="evidence" value="ECO:0007669"/>
    <property type="project" value="Ensembl"/>
</dbReference>
<dbReference type="GO" id="GO:0001701">
    <property type="term" value="P:in utero embryonic development"/>
    <property type="evidence" value="ECO:0000315"/>
    <property type="project" value="MGI"/>
</dbReference>
<dbReference type="GO" id="GO:0010638">
    <property type="term" value="P:positive regulation of organelle organization"/>
    <property type="evidence" value="ECO:0007669"/>
    <property type="project" value="Ensembl"/>
</dbReference>
<dbReference type="GO" id="GO:0015031">
    <property type="term" value="P:protein transport"/>
    <property type="evidence" value="ECO:0007669"/>
    <property type="project" value="UniProtKB-KW"/>
</dbReference>
<dbReference type="CDD" id="cd06902">
    <property type="entry name" value="lectin_ERGIC-53_ERGL"/>
    <property type="match status" value="1"/>
</dbReference>
<dbReference type="FunFam" id="2.60.120.200:FF:000028">
    <property type="entry name" value="Blast:Protein ERGIC-53"/>
    <property type="match status" value="1"/>
</dbReference>
<dbReference type="Gene3D" id="2.60.120.200">
    <property type="match status" value="1"/>
</dbReference>
<dbReference type="InterPro" id="IPR013320">
    <property type="entry name" value="ConA-like_dom_sf"/>
</dbReference>
<dbReference type="InterPro" id="IPR051136">
    <property type="entry name" value="Intracellular_Lectin-GPT"/>
</dbReference>
<dbReference type="InterPro" id="IPR005052">
    <property type="entry name" value="Lectin_leg"/>
</dbReference>
<dbReference type="PANTHER" id="PTHR12223:SF32">
    <property type="entry name" value="PROTEIN ERGIC-53"/>
    <property type="match status" value="1"/>
</dbReference>
<dbReference type="PANTHER" id="PTHR12223">
    <property type="entry name" value="VESICULAR MANNOSE-BINDING LECTIN"/>
    <property type="match status" value="1"/>
</dbReference>
<dbReference type="Pfam" id="PF03388">
    <property type="entry name" value="Lectin_leg-like"/>
    <property type="match status" value="1"/>
</dbReference>
<dbReference type="SUPFAM" id="SSF49899">
    <property type="entry name" value="Concanavalin A-like lectins/glucanases"/>
    <property type="match status" value="1"/>
</dbReference>
<dbReference type="PROSITE" id="PS51328">
    <property type="entry name" value="L_LECTIN_LIKE"/>
    <property type="match status" value="1"/>
</dbReference>
<evidence type="ECO:0000250" key="1"/>
<evidence type="ECO:0000250" key="2">
    <source>
        <dbReference type="UniProtKB" id="P49257"/>
    </source>
</evidence>
<evidence type="ECO:0000255" key="3"/>
<evidence type="ECO:0000255" key="4">
    <source>
        <dbReference type="PROSITE-ProRule" id="PRU00658"/>
    </source>
</evidence>